<keyword id="KW-0007">Acetylation</keyword>
<keyword id="KW-0963">Cytoplasm</keyword>
<keyword id="KW-0206">Cytoskeleton</keyword>
<keyword id="KW-0238">DNA-binding</keyword>
<keyword id="KW-1017">Isopeptide bond</keyword>
<keyword id="KW-0479">Metal-binding</keyword>
<keyword id="KW-0539">Nucleus</keyword>
<keyword id="KW-0597">Phosphoprotein</keyword>
<keyword id="KW-1185">Reference proteome</keyword>
<keyword id="KW-0677">Repeat</keyword>
<keyword id="KW-0804">Transcription</keyword>
<keyword id="KW-0805">Transcription regulation</keyword>
<keyword id="KW-0808">Transferase</keyword>
<keyword id="KW-0832">Ubl conjugation</keyword>
<keyword id="KW-0833">Ubl conjugation pathway</keyword>
<keyword id="KW-0862">Zinc</keyword>
<keyword id="KW-0863">Zinc-finger</keyword>
<gene>
    <name type="primary">Pias1</name>
    <name type="synonym">Ddxbp1</name>
</gene>
<feature type="initiator methionine" description="Removed" evidence="2">
    <location>
        <position position="1"/>
    </location>
</feature>
<feature type="chain" id="PRO_0000218975" description="E3 SUMO-protein ligase PIAS1">
    <location>
        <begin position="2"/>
        <end position="651"/>
    </location>
</feature>
<feature type="domain" description="SAP" evidence="4">
    <location>
        <begin position="11"/>
        <end position="45"/>
    </location>
</feature>
<feature type="domain" description="PINIT" evidence="6">
    <location>
        <begin position="124"/>
        <end position="288"/>
    </location>
</feature>
<feature type="repeat" description="1">
    <location>
        <begin position="520"/>
        <end position="523"/>
    </location>
</feature>
<feature type="repeat" description="2">
    <location>
        <begin position="557"/>
        <end position="560"/>
    </location>
</feature>
<feature type="repeat" description="3; approximate">
    <location>
        <begin position="598"/>
        <end position="601"/>
    </location>
</feature>
<feature type="repeat" description="4; approximate">
    <location>
        <begin position="612"/>
        <end position="615"/>
    </location>
</feature>
<feature type="zinc finger region" description="SP-RING-type" evidence="5">
    <location>
        <begin position="320"/>
        <end position="405"/>
    </location>
</feature>
<feature type="region of interest" description="Required for interaction with MSX1" evidence="11">
    <location>
        <begin position="2"/>
        <end position="200"/>
    </location>
</feature>
<feature type="region of interest" description="SUMO1-binding" evidence="1">
    <location>
        <begin position="462"/>
        <end position="473"/>
    </location>
</feature>
<feature type="region of interest" description="Disordered" evidence="7">
    <location>
        <begin position="465"/>
        <end position="511"/>
    </location>
</feature>
<feature type="region of interest" description="4 X 4 AA repeats of N-T-S-L">
    <location>
        <begin position="520"/>
        <end position="615"/>
    </location>
</feature>
<feature type="region of interest" description="Disordered" evidence="7">
    <location>
        <begin position="600"/>
        <end position="630"/>
    </location>
</feature>
<feature type="short sequence motif" description="LXXLL motif">
    <location>
        <begin position="19"/>
        <end position="23"/>
    </location>
</feature>
<feature type="short sequence motif" description="Nuclear localization signal" evidence="3">
    <location>
        <begin position="56"/>
        <end position="64"/>
    </location>
</feature>
<feature type="short sequence motif" description="Nuclear localization signal" evidence="3">
    <location>
        <begin position="368"/>
        <end position="380"/>
    </location>
</feature>
<feature type="compositionally biased region" description="Low complexity" evidence="7">
    <location>
        <begin position="482"/>
        <end position="491"/>
    </location>
</feature>
<feature type="compositionally biased region" description="Low complexity" evidence="7">
    <location>
        <begin position="605"/>
        <end position="621"/>
    </location>
</feature>
<feature type="binding site" evidence="5">
    <location>
        <position position="351"/>
    </location>
    <ligand>
        <name>Zn(2+)</name>
        <dbReference type="ChEBI" id="CHEBI:29105"/>
    </ligand>
</feature>
<feature type="binding site" evidence="5">
    <location>
        <position position="353"/>
    </location>
    <ligand>
        <name>Zn(2+)</name>
        <dbReference type="ChEBI" id="CHEBI:29105"/>
    </ligand>
</feature>
<feature type="binding site" evidence="5">
    <location>
        <position position="374"/>
    </location>
    <ligand>
        <name>Zn(2+)</name>
        <dbReference type="ChEBI" id="CHEBI:29105"/>
    </ligand>
</feature>
<feature type="binding site" evidence="5">
    <location>
        <position position="377"/>
    </location>
    <ligand>
        <name>Zn(2+)</name>
        <dbReference type="ChEBI" id="CHEBI:29105"/>
    </ligand>
</feature>
<feature type="modified residue" description="N-acetylalanine" evidence="2">
    <location>
        <position position="2"/>
    </location>
</feature>
<feature type="modified residue" description="Phosphoserine" evidence="2">
    <location>
        <position position="467"/>
    </location>
</feature>
<feature type="modified residue" description="Phosphoserine" evidence="2">
    <location>
        <position position="468"/>
    </location>
</feature>
<feature type="modified residue" description="Phosphoserine" evidence="18">
    <location>
        <position position="483"/>
    </location>
</feature>
<feature type="modified residue" description="Phosphoserine" evidence="17 18">
    <location>
        <position position="485"/>
    </location>
</feature>
<feature type="modified residue" description="Phosphothreonine" evidence="17 18">
    <location>
        <position position="487"/>
    </location>
</feature>
<feature type="modified residue" description="Phosphoserine" evidence="18">
    <location>
        <position position="488"/>
    </location>
</feature>
<feature type="modified residue" description="Phosphoserine" evidence="18">
    <location>
        <position position="491"/>
    </location>
</feature>
<feature type="modified residue" description="Phosphoserine" evidence="2">
    <location>
        <position position="503"/>
    </location>
</feature>
<feature type="modified residue" description="Phosphoserine" evidence="2">
    <location>
        <position position="510"/>
    </location>
</feature>
<feature type="modified residue" description="Phosphoserine" evidence="2">
    <location>
        <position position="522"/>
    </location>
</feature>
<feature type="cross-link" description="Glycyl lysine isopeptide (Lys-Gly) (interchain with G-Cter in SUMO2)" evidence="2">
    <location>
        <position position="40"/>
    </location>
</feature>
<feature type="cross-link" description="Glycyl lysine isopeptide (Lys-Gly) (interchain with G-Cter in SUMO2)" evidence="2">
    <location>
        <position position="46"/>
    </location>
</feature>
<feature type="cross-link" description="Glycyl lysine isopeptide (Lys-Gly) (interchain with G-Cter in SUMO2)" evidence="2">
    <location>
        <position position="137"/>
    </location>
</feature>
<feature type="cross-link" description="Glycyl lysine isopeptide (Lys-Gly) (interchain with G-Cter in SUMO2)" evidence="2">
    <location>
        <position position="238"/>
    </location>
</feature>
<feature type="cross-link" description="Glycyl lysine isopeptide (Lys-Gly) (interchain with G-Cter in SUMO2)" evidence="2">
    <location>
        <position position="453"/>
    </location>
</feature>
<feature type="cross-link" description="Glycyl lysine isopeptide (Lys-Gly) (interchain with G-Cter in SUMO2)" evidence="2">
    <location>
        <position position="493"/>
    </location>
</feature>
<feature type="mutagenesis site" description="Loss of promotion of EKLF sumoylation; when associated with G-351 and A-356." evidence="13">
    <original>C</original>
    <variation>G</variation>
    <location>
        <position position="346"/>
    </location>
</feature>
<feature type="mutagenesis site" description="Loss of promotion of EKLF sumoylation; when associated with G-346 and A-356." evidence="13">
    <original>C</original>
    <variation>G</variation>
    <location>
        <position position="351"/>
    </location>
</feature>
<feature type="mutagenesis site" description="No effect on interaction with MSX1 or localization of either protein at the nuclear periphery." evidence="11">
    <original>C</original>
    <variation>S</variation>
    <location>
        <position position="351"/>
    </location>
</feature>
<feature type="mutagenesis site" description="Loss of promotion of EKLF sumoylation; when associated with G-346 and G-351." evidence="13">
    <original>C</original>
    <variation>A</variation>
    <location>
        <position position="356"/>
    </location>
</feature>
<feature type="mutagenesis site" description="Loss of promotion of EKLF sumoylation." evidence="13">
    <original>I</original>
    <variation>S</variation>
    <location>
        <position position="363"/>
    </location>
</feature>
<feature type="mutagenesis site" description="Loss of promotion of NCOA2 sumoylation. No effect on interaction with MSX1 or localization of either protein at the nuclear periphery." evidence="10 11">
    <original>W</original>
    <variation>A</variation>
    <location>
        <position position="372"/>
    </location>
</feature>
<feature type="mutagenesis site" description="Loss of promotion of EKLF sumoylation." evidence="13">
    <original>PV</original>
    <variation>AA</variation>
    <location>
        <begin position="375"/>
        <end position="376"/>
    </location>
</feature>
<feature type="sequence conflict" description="In Ref. 1; AAC36701." evidence="16" ref="1">
    <original>P</original>
    <variation>S</variation>
    <location>
        <position position="320"/>
    </location>
</feature>
<comment type="function">
    <text evidence="2 11 14 15">Functions as an E3-type small ubiquitin-like modifier (SUMO) ligase, stabilizing the interaction between UBE2I and the substrate, and as a SUMO-tethering factor (PubMed:24061474). Catalyzes sumoylation of various proteins, such as CEBPB, MRE11, MTA1, PTK2 and PML (PubMed:24061474). Plays a crucial role as a transcriptional coregulation in various cellular pathways, including the STAT pathway, the p53 pathway and the steroid hormone signaling pathway (By similarity). In vitro, binds A/T-rich DNA (By similarity). The effects of this transcriptional coregulation, transactivation or silencing, may vary depending upon the biological context (By similarity). Mediates sumoylation of MRE11, stabilizing MRE11 on chromatin during end resection (By similarity). Sumoylates PML (at 'Lys-65' and 'Lys-160') and PML-RAR and promotes their ubiquitin-mediated degradation (PubMed:22406621). PIAS1-mediated sumoylation of PML promotes its interaction with CSNK2A1/CK2 which in turn promotes PML phosphorylation and degradation (PubMed:22406621). Enhances the sumoylation of MTA1 and may participate in its paralog-selective sumoylation (By similarity). Plays a dynamic role in adipogenesis by promoting the SUMOylation and degradation of CEBPB (PubMed:24061474). Mediates the nuclear mobility and localization of MSX1 to the nuclear periphery, whereby MSX1 is brought into the proximity of target myoblast differentiation factor genes (PubMed:16600910). Also required for the binding of MSX1 to the core enhancer region in target gene promoter regions, independent of its sumoylation activity (PubMed:16600910). Capable of binding to the core enhancer region TAAT box in the MYOD1 gene promoter (PubMed:16600910).</text>
</comment>
<comment type="catalytic activity">
    <reaction>
        <text>S-ubiquitinyl-[E2 ubiquitin-conjugating enzyme]-L-cysteine + [acceptor protein]-L-lysine = [E2 ubiquitin-conjugating enzyme]-L-cysteine + N(6)-ubiquitinyl-[acceptor protein]-L-lysine.</text>
        <dbReference type="EC" id="2.3.2.27"/>
    </reaction>
</comment>
<comment type="pathway">
    <text>Protein modification; protein sumoylation.</text>
</comment>
<comment type="subunit">
    <text evidence="1 2 9 10 11 12 14">Interacts with NR2C1; the interaction promotes its sumoylation. Interacts with DDX21, CSRP2, AXIN1, JUN, SATB2, PLAG1, TP53 and STAT1 (dimer), following IFNA1-stimulation. Interacts with SP3 (preferentially when SUMO-modified). Interacts with KLF8; the interaction results in SUMO ligation and repression of KLF8 transcriptional activity and of its cell cycle progression into G(1) phase (By similarity). Interacts with CHUK/IKKA; this interaction induces PIAS1 phosphorylation. Interacts with PTK2/FAK1; the interaction promotes its sumoylation (By similarity). Interacts with SUMO1, UBE2I, NCOA2 and AR. Interacts with NR2C1; the interaction promotes its sumoylation. Interacts with DDX5. Interacts with MTA1 (By similarity). Interacts with PML (isoform PML-12). Interacts with PRDM1 (By similarity). Interacts (via N-terminus) with MSX1 (via C-terminus); the interaction is required for the localization of both proteins to the nuclear periphery and specific binding of MSX1 to the core enhancer region in target gene promoters (PubMed:16600910).</text>
</comment>
<comment type="interaction">
    <interactant intactId="EBI-3508327">
        <id>O88907</id>
    </interactant>
    <interactant intactId="EBI-15617004">
        <id>Q505F1</id>
        <label>Nr2c1</label>
    </interactant>
    <organismsDiffer>false</organismsDiffer>
    <experiments>4</experiments>
</comment>
<comment type="interaction">
    <interactant intactId="EBI-3508327">
        <id>O88907</id>
    </interactant>
    <interactant intactId="EBI-3508336">
        <id>Q9Z0P7</id>
        <label>Sufu</label>
    </interactant>
    <organismsDiffer>false</organismsDiffer>
    <experiments>3</experiments>
</comment>
<comment type="subcellular location">
    <subcellularLocation>
        <location evidence="11">Nucleus</location>
    </subcellularLocation>
    <subcellularLocation>
        <location evidence="2">Nucleus speckle</location>
    </subcellularLocation>
    <subcellularLocation>
        <location evidence="10 14">Nucleus</location>
        <location evidence="10 14">PML body</location>
    </subcellularLocation>
    <subcellularLocation>
        <location evidence="2">Cytoplasm</location>
        <location evidence="2">Cytoskeleton</location>
    </subcellularLocation>
    <text evidence="2 11">Interaction with CSRP2 may induce a partial redistribution along the cytoskeleton (By similarity). Interaction with MSX1 is required for localization to the nuclear periphery (PubMed:16600910).</text>
</comment>
<comment type="tissue specificity">
    <text evidence="8">Expressed in kidney, heart, spleen, brain and cerebellum; weak expression, if any, in liver and lung.</text>
</comment>
<comment type="developmental stage">
    <text evidence="8 15">Expressed as early as 7.6 dpc. Expression remains high through 15.5 dpc (PubMed:10854042). In 3T3-L1 cells, expression is transiently induced during late adipocyte differentiation (PubMed:24061474).</text>
</comment>
<comment type="domain">
    <text>The LXXLL motif is a transcriptional coregulator signature.</text>
</comment>
<comment type="domain">
    <text>The SP-RING-type domain is required for promoting EKLF sumoylation.</text>
</comment>
<comment type="PTM">
    <text evidence="2">Sumoylated.</text>
</comment>
<comment type="similarity">
    <text evidence="16">Belongs to the PIAS family.</text>
</comment>
<dbReference type="EC" id="2.3.2.27"/>
<dbReference type="EMBL" id="AF077950">
    <property type="protein sequence ID" value="AAC36701.1"/>
    <property type="molecule type" value="mRNA"/>
</dbReference>
<dbReference type="EMBL" id="AK075708">
    <property type="protein sequence ID" value="BAC35902.1"/>
    <property type="molecule type" value="mRNA"/>
</dbReference>
<dbReference type="EMBL" id="BC051417">
    <property type="protein sequence ID" value="AAH51417.1"/>
    <property type="molecule type" value="mRNA"/>
</dbReference>
<dbReference type="CCDS" id="CCDS40665.1"/>
<dbReference type="RefSeq" id="NP_062637.2">
    <property type="nucleotide sequence ID" value="NM_019663.3"/>
</dbReference>
<dbReference type="BMRB" id="O88907"/>
<dbReference type="SMR" id="O88907"/>
<dbReference type="BioGRID" id="208005">
    <property type="interactions" value="38"/>
</dbReference>
<dbReference type="CORUM" id="O88907"/>
<dbReference type="DIP" id="DIP-29277N"/>
<dbReference type="FunCoup" id="O88907">
    <property type="interactions" value="5383"/>
</dbReference>
<dbReference type="IntAct" id="O88907">
    <property type="interactions" value="19"/>
</dbReference>
<dbReference type="MINT" id="O88907"/>
<dbReference type="STRING" id="10090.ENSMUSP00000096248"/>
<dbReference type="GlyGen" id="O88907">
    <property type="glycosylation" value="1 site, 1 N-linked glycan (1 site)"/>
</dbReference>
<dbReference type="iPTMnet" id="O88907"/>
<dbReference type="PhosphoSitePlus" id="O88907"/>
<dbReference type="jPOST" id="O88907"/>
<dbReference type="PaxDb" id="10090-ENSMUSP00000096248"/>
<dbReference type="PeptideAtlas" id="O88907"/>
<dbReference type="ProteomicsDB" id="301829"/>
<dbReference type="Pumba" id="O88907"/>
<dbReference type="Antibodypedia" id="26284">
    <property type="antibodies" value="360 antibodies from 35 providers"/>
</dbReference>
<dbReference type="DNASU" id="56469"/>
<dbReference type="Ensembl" id="ENSMUST00000098651.6">
    <property type="protein sequence ID" value="ENSMUSP00000096248.5"/>
    <property type="gene ID" value="ENSMUSG00000032405.11"/>
</dbReference>
<dbReference type="GeneID" id="56469"/>
<dbReference type="KEGG" id="mmu:56469"/>
<dbReference type="UCSC" id="uc009qas.1">
    <property type="organism name" value="mouse"/>
</dbReference>
<dbReference type="AGR" id="MGI:1913125"/>
<dbReference type="CTD" id="8554"/>
<dbReference type="MGI" id="MGI:1913125">
    <property type="gene designation" value="Pias1"/>
</dbReference>
<dbReference type="VEuPathDB" id="HostDB:ENSMUSG00000032405"/>
<dbReference type="eggNOG" id="KOG2169">
    <property type="taxonomic scope" value="Eukaryota"/>
</dbReference>
<dbReference type="GeneTree" id="ENSGT01030000234539"/>
<dbReference type="HOGENOM" id="CLU_020768_3_0_1"/>
<dbReference type="InParanoid" id="O88907"/>
<dbReference type="OMA" id="PASPMNN"/>
<dbReference type="OrthoDB" id="10263264at2759"/>
<dbReference type="PhylomeDB" id="O88907"/>
<dbReference type="TreeFam" id="TF323787"/>
<dbReference type="Reactome" id="R-MMU-3108214">
    <property type="pathway name" value="SUMOylation of DNA damage response and repair proteins"/>
</dbReference>
<dbReference type="Reactome" id="R-MMU-3232118">
    <property type="pathway name" value="SUMOylation of transcription factors"/>
</dbReference>
<dbReference type="Reactome" id="R-MMU-3232142">
    <property type="pathway name" value="SUMOylation of ubiquitinylation proteins"/>
</dbReference>
<dbReference type="Reactome" id="R-MMU-3899300">
    <property type="pathway name" value="SUMOylation of transcription cofactors"/>
</dbReference>
<dbReference type="Reactome" id="R-MMU-4090294">
    <property type="pathway name" value="SUMOylation of intracellular receptors"/>
</dbReference>
<dbReference type="Reactome" id="R-MMU-4551638">
    <property type="pathway name" value="SUMOylation of chromatin organization proteins"/>
</dbReference>
<dbReference type="Reactome" id="R-MMU-5696395">
    <property type="pathway name" value="Formation of Incision Complex in GG-NER"/>
</dbReference>
<dbReference type="Reactome" id="R-MMU-877312">
    <property type="pathway name" value="Regulation of IFNG signaling"/>
</dbReference>
<dbReference type="UniPathway" id="UPA00886"/>
<dbReference type="BioGRID-ORCS" id="56469">
    <property type="hits" value="9 hits in 79 CRISPR screens"/>
</dbReference>
<dbReference type="ChiTaRS" id="Pias1">
    <property type="organism name" value="mouse"/>
</dbReference>
<dbReference type="PRO" id="PR:O88907"/>
<dbReference type="Proteomes" id="UP000000589">
    <property type="component" value="Chromosome 9"/>
</dbReference>
<dbReference type="RNAct" id="O88907">
    <property type="molecule type" value="protein"/>
</dbReference>
<dbReference type="Bgee" id="ENSMUSG00000032405">
    <property type="expression patterns" value="Expressed in animal zygote and 280 other cell types or tissues"/>
</dbReference>
<dbReference type="ExpressionAtlas" id="O88907">
    <property type="expression patterns" value="baseline and differential"/>
</dbReference>
<dbReference type="GO" id="GO:0005856">
    <property type="term" value="C:cytoskeleton"/>
    <property type="evidence" value="ECO:0007669"/>
    <property type="project" value="UniProtKB-SubCell"/>
</dbReference>
<dbReference type="GO" id="GO:0098978">
    <property type="term" value="C:glutamatergic synapse"/>
    <property type="evidence" value="ECO:0000314"/>
    <property type="project" value="SynGO"/>
</dbReference>
<dbReference type="GO" id="GO:0034399">
    <property type="term" value="C:nuclear periphery"/>
    <property type="evidence" value="ECO:0000314"/>
    <property type="project" value="UniProtKB"/>
</dbReference>
<dbReference type="GO" id="GO:0016607">
    <property type="term" value="C:nuclear speck"/>
    <property type="evidence" value="ECO:0007669"/>
    <property type="project" value="UniProtKB-SubCell"/>
</dbReference>
<dbReference type="GO" id="GO:0005654">
    <property type="term" value="C:nucleoplasm"/>
    <property type="evidence" value="ECO:0000314"/>
    <property type="project" value="MGI"/>
</dbReference>
<dbReference type="GO" id="GO:0005634">
    <property type="term" value="C:nucleus"/>
    <property type="evidence" value="ECO:0000314"/>
    <property type="project" value="MGI"/>
</dbReference>
<dbReference type="GO" id="GO:0016605">
    <property type="term" value="C:PML body"/>
    <property type="evidence" value="ECO:0007669"/>
    <property type="project" value="UniProtKB-SubCell"/>
</dbReference>
<dbReference type="GO" id="GO:0099524">
    <property type="term" value="C:postsynaptic cytosol"/>
    <property type="evidence" value="ECO:0000314"/>
    <property type="project" value="SynGO"/>
</dbReference>
<dbReference type="GO" id="GO:0099523">
    <property type="term" value="C:presynaptic cytosol"/>
    <property type="evidence" value="ECO:0000314"/>
    <property type="project" value="SynGO"/>
</dbReference>
<dbReference type="GO" id="GO:0140297">
    <property type="term" value="F:DNA-binding transcription factor binding"/>
    <property type="evidence" value="ECO:0000353"/>
    <property type="project" value="UniProtKB"/>
</dbReference>
<dbReference type="GO" id="GO:0019904">
    <property type="term" value="F:protein domain specific binding"/>
    <property type="evidence" value="ECO:0007669"/>
    <property type="project" value="Ensembl"/>
</dbReference>
<dbReference type="GO" id="GO:0061665">
    <property type="term" value="F:SUMO ligase activity"/>
    <property type="evidence" value="ECO:0000314"/>
    <property type="project" value="UniProtKB"/>
</dbReference>
<dbReference type="GO" id="GO:0019789">
    <property type="term" value="F:SUMO transferase activity"/>
    <property type="evidence" value="ECO:0000269"/>
    <property type="project" value="Reactome"/>
</dbReference>
<dbReference type="GO" id="GO:0000976">
    <property type="term" value="F:transcription cis-regulatory region binding"/>
    <property type="evidence" value="ECO:0000314"/>
    <property type="project" value="UniProtKB"/>
</dbReference>
<dbReference type="GO" id="GO:0003714">
    <property type="term" value="F:transcription corepressor activity"/>
    <property type="evidence" value="ECO:0000266"/>
    <property type="project" value="MGI"/>
</dbReference>
<dbReference type="GO" id="GO:0031625">
    <property type="term" value="F:ubiquitin protein ligase binding"/>
    <property type="evidence" value="ECO:0000353"/>
    <property type="project" value="BHF-UCL"/>
</dbReference>
<dbReference type="GO" id="GO:0008270">
    <property type="term" value="F:zinc ion binding"/>
    <property type="evidence" value="ECO:0007669"/>
    <property type="project" value="UniProtKB-KW"/>
</dbReference>
<dbReference type="GO" id="GO:0007259">
    <property type="term" value="P:cell surface receptor signaling pathway via JAK-STAT"/>
    <property type="evidence" value="ECO:0000266"/>
    <property type="project" value="MGI"/>
</dbReference>
<dbReference type="GO" id="GO:0006974">
    <property type="term" value="P:DNA damage response"/>
    <property type="evidence" value="ECO:0007669"/>
    <property type="project" value="Ensembl"/>
</dbReference>
<dbReference type="GO" id="GO:0045444">
    <property type="term" value="P:fat cell differentiation"/>
    <property type="evidence" value="ECO:0000314"/>
    <property type="project" value="UniProtKB"/>
</dbReference>
<dbReference type="GO" id="GO:0000082">
    <property type="term" value="P:G1/S transition of mitotic cell cycle"/>
    <property type="evidence" value="ECO:0007669"/>
    <property type="project" value="Ensembl"/>
</dbReference>
<dbReference type="GO" id="GO:0043066">
    <property type="term" value="P:negative regulation of apoptotic process"/>
    <property type="evidence" value="ECO:0007669"/>
    <property type="project" value="Ensembl"/>
</dbReference>
<dbReference type="GO" id="GO:0000122">
    <property type="term" value="P:negative regulation of transcription by RNA polymerase II"/>
    <property type="evidence" value="ECO:0000315"/>
    <property type="project" value="BHF-UCL"/>
</dbReference>
<dbReference type="GO" id="GO:0045893">
    <property type="term" value="P:positive regulation of DNA-templated transcription"/>
    <property type="evidence" value="ECO:0007669"/>
    <property type="project" value="Ensembl"/>
</dbReference>
<dbReference type="GO" id="GO:0032436">
    <property type="term" value="P:positive regulation of proteasomal ubiquitin-dependent protein catabolic process"/>
    <property type="evidence" value="ECO:0000315"/>
    <property type="project" value="UniProtKB"/>
</dbReference>
<dbReference type="GO" id="GO:1904377">
    <property type="term" value="P:positive regulation of protein localization to cell periphery"/>
    <property type="evidence" value="ECO:0000314"/>
    <property type="project" value="UniProtKB"/>
</dbReference>
<dbReference type="GO" id="GO:0033235">
    <property type="term" value="P:positive regulation of protein sumoylation"/>
    <property type="evidence" value="ECO:0000250"/>
    <property type="project" value="UniProtKB"/>
</dbReference>
<dbReference type="GO" id="GO:0051152">
    <property type="term" value="P:positive regulation of smooth muscle cell differentiation"/>
    <property type="evidence" value="ECO:0007669"/>
    <property type="project" value="Ensembl"/>
</dbReference>
<dbReference type="GO" id="GO:0016925">
    <property type="term" value="P:protein sumoylation"/>
    <property type="evidence" value="ECO:0000314"/>
    <property type="project" value="UniProtKB"/>
</dbReference>
<dbReference type="GO" id="GO:0065004">
    <property type="term" value="P:protein-DNA complex assembly"/>
    <property type="evidence" value="ECO:0007669"/>
    <property type="project" value="Ensembl"/>
</dbReference>
<dbReference type="GO" id="GO:0042127">
    <property type="term" value="P:regulation of cell population proliferation"/>
    <property type="evidence" value="ECO:0000315"/>
    <property type="project" value="UniProtKB"/>
</dbReference>
<dbReference type="GO" id="GO:0007283">
    <property type="term" value="P:spermatogenesis"/>
    <property type="evidence" value="ECO:0007669"/>
    <property type="project" value="Ensembl"/>
</dbReference>
<dbReference type="GO" id="GO:0008542">
    <property type="term" value="P:visual learning"/>
    <property type="evidence" value="ECO:0007669"/>
    <property type="project" value="Ensembl"/>
</dbReference>
<dbReference type="CDD" id="cd16818">
    <property type="entry name" value="SP-RING_PIAS1"/>
    <property type="match status" value="1"/>
</dbReference>
<dbReference type="FunFam" id="1.10.720.30:FF:000001">
    <property type="entry name" value="E3 SUMO-protein ligase PIAS2 isoform 1"/>
    <property type="match status" value="1"/>
</dbReference>
<dbReference type="FunFam" id="2.60.120.780:FF:000001">
    <property type="entry name" value="E3 SUMO-protein ligase PIAS2 isoform X1"/>
    <property type="match status" value="1"/>
</dbReference>
<dbReference type="FunFam" id="3.30.40.10:FF:000003">
    <property type="entry name" value="E3 SUMO-protein ligase PIAS2 isoform X1"/>
    <property type="match status" value="1"/>
</dbReference>
<dbReference type="Gene3D" id="2.60.120.780">
    <property type="entry name" value="PINIT domain"/>
    <property type="match status" value="1"/>
</dbReference>
<dbReference type="Gene3D" id="1.10.720.30">
    <property type="entry name" value="SAP domain"/>
    <property type="match status" value="1"/>
</dbReference>
<dbReference type="Gene3D" id="3.30.40.10">
    <property type="entry name" value="Zinc/RING finger domain, C3HC4 (zinc finger)"/>
    <property type="match status" value="1"/>
</dbReference>
<dbReference type="InterPro" id="IPR023321">
    <property type="entry name" value="PINIT"/>
</dbReference>
<dbReference type="InterPro" id="IPR038654">
    <property type="entry name" value="PINIT_sf"/>
</dbReference>
<dbReference type="InterPro" id="IPR003034">
    <property type="entry name" value="SAP_dom"/>
</dbReference>
<dbReference type="InterPro" id="IPR036361">
    <property type="entry name" value="SAP_dom_sf"/>
</dbReference>
<dbReference type="InterPro" id="IPR004181">
    <property type="entry name" value="Znf_MIZ"/>
</dbReference>
<dbReference type="InterPro" id="IPR013083">
    <property type="entry name" value="Znf_RING/FYVE/PHD"/>
</dbReference>
<dbReference type="PANTHER" id="PTHR10782:SF11">
    <property type="entry name" value="E3 SUMO-PROTEIN LIGASE PIAS1"/>
    <property type="match status" value="1"/>
</dbReference>
<dbReference type="PANTHER" id="PTHR10782">
    <property type="entry name" value="ZINC FINGER MIZ DOMAIN-CONTAINING PROTEIN"/>
    <property type="match status" value="1"/>
</dbReference>
<dbReference type="Pfam" id="PF14324">
    <property type="entry name" value="PINIT"/>
    <property type="match status" value="1"/>
</dbReference>
<dbReference type="Pfam" id="PF02891">
    <property type="entry name" value="zf-MIZ"/>
    <property type="match status" value="1"/>
</dbReference>
<dbReference type="SMART" id="SM00513">
    <property type="entry name" value="SAP"/>
    <property type="match status" value="1"/>
</dbReference>
<dbReference type="SUPFAM" id="SSF68906">
    <property type="entry name" value="SAP domain"/>
    <property type="match status" value="1"/>
</dbReference>
<dbReference type="PROSITE" id="PS51466">
    <property type="entry name" value="PINIT"/>
    <property type="match status" value="1"/>
</dbReference>
<dbReference type="PROSITE" id="PS50800">
    <property type="entry name" value="SAP"/>
    <property type="match status" value="1"/>
</dbReference>
<dbReference type="PROSITE" id="PS51044">
    <property type="entry name" value="ZF_SP_RING"/>
    <property type="match status" value="1"/>
</dbReference>
<evidence type="ECO:0000250" key="1"/>
<evidence type="ECO:0000250" key="2">
    <source>
        <dbReference type="UniProtKB" id="O75925"/>
    </source>
</evidence>
<evidence type="ECO:0000255" key="3"/>
<evidence type="ECO:0000255" key="4">
    <source>
        <dbReference type="PROSITE-ProRule" id="PRU00186"/>
    </source>
</evidence>
<evidence type="ECO:0000255" key="5">
    <source>
        <dbReference type="PROSITE-ProRule" id="PRU00452"/>
    </source>
</evidence>
<evidence type="ECO:0000255" key="6">
    <source>
        <dbReference type="PROSITE-ProRule" id="PRU00799"/>
    </source>
</evidence>
<evidence type="ECO:0000256" key="7">
    <source>
        <dbReference type="SAM" id="MobiDB-lite"/>
    </source>
</evidence>
<evidence type="ECO:0000269" key="8">
    <source>
    </source>
</evidence>
<evidence type="ECO:0000269" key="9">
    <source>
    </source>
</evidence>
<evidence type="ECO:0000269" key="10">
    <source>
    </source>
</evidence>
<evidence type="ECO:0000269" key="11">
    <source>
    </source>
</evidence>
<evidence type="ECO:0000269" key="12">
    <source>
    </source>
</evidence>
<evidence type="ECO:0000269" key="13">
    <source>
    </source>
</evidence>
<evidence type="ECO:0000269" key="14">
    <source>
    </source>
</evidence>
<evidence type="ECO:0000269" key="15">
    <source>
    </source>
</evidence>
<evidence type="ECO:0000305" key="16"/>
<evidence type="ECO:0007744" key="17">
    <source>
    </source>
</evidence>
<evidence type="ECO:0007744" key="18">
    <source>
    </source>
</evidence>
<protein>
    <recommendedName>
        <fullName>E3 SUMO-protein ligase PIAS1</fullName>
        <ecNumber>2.3.2.27</ecNumber>
    </recommendedName>
    <alternativeName>
        <fullName>DEAD/H box-binding protein 1</fullName>
    </alternativeName>
    <alternativeName>
        <fullName>Protein inhibitor of activated STAT protein 1</fullName>
    </alternativeName>
    <alternativeName>
        <fullName evidence="16">RING-type E3 ubiquitin transferase PIAS1</fullName>
    </alternativeName>
</protein>
<sequence>MADSAELKQMVMSLRVSELQVLLGYAGRNKHGRKHELLTKALHLLKAGCSPAVQMKIKELYRRRFPQKIMTPADLSIPNVHSSPMPPTLSPSTIPQLTYDGHPASSPLLPVSLLGPKHELELPHLTSALHPVHPDIKLQKLPFYDLLDELIKPTSLASDNSQRFRETCFAFALTPQQVQQISSSMDISGTKCDFTVQVQLRFCLSETSCPQEDHFPPNLCVKVNTKPCSLPGYLPPTKNGVEPKRPSRPINITSLVRLSTTVPNTIVVSWTAEIGRTYSMAVYLVKQLSSTVLLQRLRAKGIRNPDHSRALIKEKLTADPDSEIATTSLRVSLLCPLGKMRLTIPCRALTCSHLQCFDATLYIQMNEKKPTWVCPVCDKKAPYEHLIIDGLFMEILKYCTDCDEIQFKEDGSWAPMRSKKEVQEVTASYNGVDGCLSSTLEHQVASHNQSSNKNKKVEVIDLTIDSSSDEEEEEPPAKRTCPSLSPTSPLSNKGILSLPHQASPVSRTPSLPAVDTSYINTSLIQDYRHPFHMTPMPYDLQGLDFFPFLSGDNQHYNTSLLAAAAAAVSDDQDLLHSSRFFPYTSSQMFLDQLSAGGSTSLPATNGSSSGSNSSLVSSNSLRESHGHGVASRSSADTASIFGIIPDIISLD</sequence>
<proteinExistence type="evidence at protein level"/>
<reference key="1">
    <citation type="journal article" date="1998" name="Proc. Natl. Acad. Sci. U.S.A.">
        <title>Inhibition of Stat1-mediated gene activation by PIAS1.</title>
        <authorList>
            <person name="Liu B."/>
            <person name="Liao J."/>
            <person name="Rao X."/>
            <person name="Kushner S.A."/>
            <person name="Chung C.D."/>
            <person name="Chang D.D."/>
            <person name="Shuai K."/>
        </authorList>
    </citation>
    <scope>NUCLEOTIDE SEQUENCE [MRNA]</scope>
    <source>
        <tissue>B-cell</tissue>
    </source>
</reference>
<reference key="2">
    <citation type="journal article" date="2005" name="Science">
        <title>The transcriptional landscape of the mammalian genome.</title>
        <authorList>
            <person name="Carninci P."/>
            <person name="Kasukawa T."/>
            <person name="Katayama S."/>
            <person name="Gough J."/>
            <person name="Frith M.C."/>
            <person name="Maeda N."/>
            <person name="Oyama R."/>
            <person name="Ravasi T."/>
            <person name="Lenhard B."/>
            <person name="Wells C."/>
            <person name="Kodzius R."/>
            <person name="Shimokawa K."/>
            <person name="Bajic V.B."/>
            <person name="Brenner S.E."/>
            <person name="Batalov S."/>
            <person name="Forrest A.R."/>
            <person name="Zavolan M."/>
            <person name="Davis M.J."/>
            <person name="Wilming L.G."/>
            <person name="Aidinis V."/>
            <person name="Allen J.E."/>
            <person name="Ambesi-Impiombato A."/>
            <person name="Apweiler R."/>
            <person name="Aturaliya R.N."/>
            <person name="Bailey T.L."/>
            <person name="Bansal M."/>
            <person name="Baxter L."/>
            <person name="Beisel K.W."/>
            <person name="Bersano T."/>
            <person name="Bono H."/>
            <person name="Chalk A.M."/>
            <person name="Chiu K.P."/>
            <person name="Choudhary V."/>
            <person name="Christoffels A."/>
            <person name="Clutterbuck D.R."/>
            <person name="Crowe M.L."/>
            <person name="Dalla E."/>
            <person name="Dalrymple B.P."/>
            <person name="de Bono B."/>
            <person name="Della Gatta G."/>
            <person name="di Bernardo D."/>
            <person name="Down T."/>
            <person name="Engstrom P."/>
            <person name="Fagiolini M."/>
            <person name="Faulkner G."/>
            <person name="Fletcher C.F."/>
            <person name="Fukushima T."/>
            <person name="Furuno M."/>
            <person name="Futaki S."/>
            <person name="Gariboldi M."/>
            <person name="Georgii-Hemming P."/>
            <person name="Gingeras T.R."/>
            <person name="Gojobori T."/>
            <person name="Green R.E."/>
            <person name="Gustincich S."/>
            <person name="Harbers M."/>
            <person name="Hayashi Y."/>
            <person name="Hensch T.K."/>
            <person name="Hirokawa N."/>
            <person name="Hill D."/>
            <person name="Huminiecki L."/>
            <person name="Iacono M."/>
            <person name="Ikeo K."/>
            <person name="Iwama A."/>
            <person name="Ishikawa T."/>
            <person name="Jakt M."/>
            <person name="Kanapin A."/>
            <person name="Katoh M."/>
            <person name="Kawasawa Y."/>
            <person name="Kelso J."/>
            <person name="Kitamura H."/>
            <person name="Kitano H."/>
            <person name="Kollias G."/>
            <person name="Krishnan S.P."/>
            <person name="Kruger A."/>
            <person name="Kummerfeld S.K."/>
            <person name="Kurochkin I.V."/>
            <person name="Lareau L.F."/>
            <person name="Lazarevic D."/>
            <person name="Lipovich L."/>
            <person name="Liu J."/>
            <person name="Liuni S."/>
            <person name="McWilliam S."/>
            <person name="Madan Babu M."/>
            <person name="Madera M."/>
            <person name="Marchionni L."/>
            <person name="Matsuda H."/>
            <person name="Matsuzawa S."/>
            <person name="Miki H."/>
            <person name="Mignone F."/>
            <person name="Miyake S."/>
            <person name="Morris K."/>
            <person name="Mottagui-Tabar S."/>
            <person name="Mulder N."/>
            <person name="Nakano N."/>
            <person name="Nakauchi H."/>
            <person name="Ng P."/>
            <person name="Nilsson R."/>
            <person name="Nishiguchi S."/>
            <person name="Nishikawa S."/>
            <person name="Nori F."/>
            <person name="Ohara O."/>
            <person name="Okazaki Y."/>
            <person name="Orlando V."/>
            <person name="Pang K.C."/>
            <person name="Pavan W.J."/>
            <person name="Pavesi G."/>
            <person name="Pesole G."/>
            <person name="Petrovsky N."/>
            <person name="Piazza S."/>
            <person name="Reed J."/>
            <person name="Reid J.F."/>
            <person name="Ring B.Z."/>
            <person name="Ringwald M."/>
            <person name="Rost B."/>
            <person name="Ruan Y."/>
            <person name="Salzberg S.L."/>
            <person name="Sandelin A."/>
            <person name="Schneider C."/>
            <person name="Schoenbach C."/>
            <person name="Sekiguchi K."/>
            <person name="Semple C.A."/>
            <person name="Seno S."/>
            <person name="Sessa L."/>
            <person name="Sheng Y."/>
            <person name="Shibata Y."/>
            <person name="Shimada H."/>
            <person name="Shimada K."/>
            <person name="Silva D."/>
            <person name="Sinclair B."/>
            <person name="Sperling S."/>
            <person name="Stupka E."/>
            <person name="Sugiura K."/>
            <person name="Sultana R."/>
            <person name="Takenaka Y."/>
            <person name="Taki K."/>
            <person name="Tammoja K."/>
            <person name="Tan S.L."/>
            <person name="Tang S."/>
            <person name="Taylor M.S."/>
            <person name="Tegner J."/>
            <person name="Teichmann S.A."/>
            <person name="Ueda H.R."/>
            <person name="van Nimwegen E."/>
            <person name="Verardo R."/>
            <person name="Wei C.L."/>
            <person name="Yagi K."/>
            <person name="Yamanishi H."/>
            <person name="Zabarovsky E."/>
            <person name="Zhu S."/>
            <person name="Zimmer A."/>
            <person name="Hide W."/>
            <person name="Bult C."/>
            <person name="Grimmond S.M."/>
            <person name="Teasdale R.D."/>
            <person name="Liu E.T."/>
            <person name="Brusic V."/>
            <person name="Quackenbush J."/>
            <person name="Wahlestedt C."/>
            <person name="Mattick J.S."/>
            <person name="Hume D.A."/>
            <person name="Kai C."/>
            <person name="Sasaki D."/>
            <person name="Tomaru Y."/>
            <person name="Fukuda S."/>
            <person name="Kanamori-Katayama M."/>
            <person name="Suzuki M."/>
            <person name="Aoki J."/>
            <person name="Arakawa T."/>
            <person name="Iida J."/>
            <person name="Imamura K."/>
            <person name="Itoh M."/>
            <person name="Kato T."/>
            <person name="Kawaji H."/>
            <person name="Kawagashira N."/>
            <person name="Kawashima T."/>
            <person name="Kojima M."/>
            <person name="Kondo S."/>
            <person name="Konno H."/>
            <person name="Nakano K."/>
            <person name="Ninomiya N."/>
            <person name="Nishio T."/>
            <person name="Okada M."/>
            <person name="Plessy C."/>
            <person name="Shibata K."/>
            <person name="Shiraki T."/>
            <person name="Suzuki S."/>
            <person name="Tagami M."/>
            <person name="Waki K."/>
            <person name="Watahiki A."/>
            <person name="Okamura-Oho Y."/>
            <person name="Suzuki H."/>
            <person name="Kawai J."/>
            <person name="Hayashizaki Y."/>
        </authorList>
    </citation>
    <scope>NUCLEOTIDE SEQUENCE [LARGE SCALE MRNA]</scope>
    <source>
        <strain>C57BL/6J</strain>
        <tissue>Lung</tissue>
    </source>
</reference>
<reference key="3">
    <citation type="journal article" date="2004" name="Genome Res.">
        <title>The status, quality, and expansion of the NIH full-length cDNA project: the Mammalian Gene Collection (MGC).</title>
        <authorList>
            <consortium name="The MGC Project Team"/>
        </authorList>
    </citation>
    <scope>NUCLEOTIDE SEQUENCE [LARGE SCALE MRNA]</scope>
    <source>
        <strain>FVB/N-3</strain>
        <tissue>Mammary tumor</tissue>
    </source>
</reference>
<reference key="4">
    <citation type="journal article" date="2000" name="J. Mol. Neurosci.">
        <title>Cloning and analysis of a murine Pias family member, Pias-gamma, in developing skin and neurons.</title>
        <authorList>
            <person name="Sturm S."/>
            <person name="Koch M."/>
            <person name="White F.A."/>
        </authorList>
    </citation>
    <scope>DEVELOPMENTAL STAGE</scope>
    <scope>TISSUE SPECIFICITY</scope>
    <source>
        <tissue>Brain</tissue>
    </source>
</reference>
<reference key="5">
    <citation type="journal article" date="2000" name="Mol. Endocrinol.">
        <title>ARIP3 (androgen receptor-interacting protein 3) and other PIAS (protein inhibitor of activated STAT) proteins differ in their ability to modulate steroid receptor-dependent transcriptional activation.</title>
        <authorList>
            <person name="Kotaja N."/>
            <person name="Aittomaeki S."/>
            <person name="Silvennoinen O."/>
            <person name="Palvimo J.J."/>
            <person name="Jaenne O.A."/>
        </authorList>
    </citation>
    <scope>INTERACTION WITH AR</scope>
</reference>
<reference key="6">
    <citation type="journal article" date="2002" name="Mol. Cell. Biol.">
        <title>PIAS proteins modulate transcription factors by functioning as SUMO-1 ligases.</title>
        <authorList>
            <person name="Kotaja N."/>
            <person name="Karvonen U."/>
            <person name="Jaenne O.A."/>
            <person name="Palvimo J.J."/>
        </authorList>
    </citation>
    <scope>INTERACTION WITH SUMO1; UBE2I AND NCOA2</scope>
    <scope>SUBCELLULAR LOCATION</scope>
    <scope>SUMOYLATION OF AR AND NCOA2</scope>
    <scope>MUTAGENESIS OF TRP-372</scope>
</reference>
<reference key="7">
    <citation type="journal article" date="2003" name="Blood">
        <title>PIAS proteins promote SUMO-1 conjugation to STAT1.</title>
        <authorList>
            <person name="Ungureanu D."/>
            <person name="Vanhatupa S."/>
            <person name="Kotaja N."/>
            <person name="Yang J."/>
            <person name="Aittomaeki S."/>
            <person name="Jaenne O.A."/>
            <person name="Palvimo J.J."/>
            <person name="Silvennoinen O."/>
        </authorList>
    </citation>
    <scope>STAT1 SUMOYLATION</scope>
</reference>
<reference key="8">
    <citation type="journal article" date="2006" name="Genes Dev.">
        <title>PIAS1 confers DNA-binding specificity on the Msx1 homeoprotein.</title>
        <authorList>
            <person name="Lee H."/>
            <person name="Quinn J.C."/>
            <person name="Prasanth K.V."/>
            <person name="Swiss V.A."/>
            <person name="Economides K.D."/>
            <person name="Camacho M.M."/>
            <person name="Spector D.L."/>
            <person name="Abate-Shen C."/>
        </authorList>
    </citation>
    <scope>FUNCTION</scope>
    <scope>INTERACTION WITH MSX1</scope>
    <scope>SUBCELLULAR LOCATION</scope>
    <scope>MUTAGENESIS OF CYS-351 AND TRP-372</scope>
</reference>
<reference key="9">
    <citation type="journal article" date="2007" name="Mol. Cell. Biol.">
        <title>Sumoylation of EKLF promotes transcriptional repression and is involved in inhibition of megakaryopoiesis.</title>
        <authorList>
            <person name="Siatecka M."/>
            <person name="Xue L."/>
            <person name="Bieker J.J."/>
        </authorList>
    </citation>
    <scope>SUMOYLATION OF KLF1</scope>
    <scope>MUTAGENESIS OF CYS-346; CYS-351; CYS-356; ILE-363 AND 375-PRO-VAL-376</scope>
</reference>
<reference key="10">
    <citation type="journal article" date="2007" name="Nat. Struct. Mol. Biol.">
        <title>SUMOylation of Tr2 orphan receptor involves Pml and fine-tunes Oct4 expression in stem cells.</title>
        <authorList>
            <person name="Park S.W."/>
            <person name="Hu X."/>
            <person name="Gupta P."/>
            <person name="Lin Y.P."/>
            <person name="Ha S.G."/>
            <person name="Wei L.N."/>
        </authorList>
    </citation>
    <scope>INTERACTION WITH NR2C1</scope>
</reference>
<reference key="11">
    <citation type="journal article" date="2007" name="Proc. Natl. Acad. Sci. U.S.A.">
        <title>Large-scale phosphorylation analysis of mouse liver.</title>
        <authorList>
            <person name="Villen J."/>
            <person name="Beausoleil S.A."/>
            <person name="Gerber S.A."/>
            <person name="Gygi S.P."/>
        </authorList>
    </citation>
    <scope>PHOSPHORYLATION [LARGE SCALE ANALYSIS] AT SER-485 AND THR-487</scope>
    <scope>IDENTIFICATION BY MASS SPECTROMETRY [LARGE SCALE ANALYSIS]</scope>
    <source>
        <tissue>Liver</tissue>
    </source>
</reference>
<reference key="12">
    <citation type="journal article" date="2010" name="Cell">
        <title>A tissue-specific atlas of mouse protein phosphorylation and expression.</title>
        <authorList>
            <person name="Huttlin E.L."/>
            <person name="Jedrychowski M.P."/>
            <person name="Elias J.E."/>
            <person name="Goswami T."/>
            <person name="Rad R."/>
            <person name="Beausoleil S.A."/>
            <person name="Villen J."/>
            <person name="Haas W."/>
            <person name="Sowa M.E."/>
            <person name="Gygi S.P."/>
        </authorList>
    </citation>
    <scope>PHOSPHORYLATION [LARGE SCALE ANALYSIS] AT SER-483; SER-485; THR-487; SER-488 AND SER-491</scope>
    <scope>IDENTIFICATION BY MASS SPECTROMETRY [LARGE SCALE ANALYSIS]</scope>
    <source>
        <tissue>Brain</tissue>
        <tissue>Brown adipose tissue</tissue>
        <tissue>Heart</tissue>
        <tissue>Kidney</tissue>
        <tissue>Liver</tissue>
        <tissue>Lung</tissue>
        <tissue>Pancreas</tissue>
        <tissue>Spleen</tissue>
        <tissue>Testis</tissue>
    </source>
</reference>
<reference key="13">
    <citation type="journal article" date="2012" name="Cancer Res.">
        <title>The SUMO E3-ligase PIAS1 regulates the tumor suppressor PML and its oncogenic counterpart PML-RARA.</title>
        <authorList>
            <person name="Rabellino A."/>
            <person name="Carter B."/>
            <person name="Konstantinidou G."/>
            <person name="Wu S.Y."/>
            <person name="Rimessi A."/>
            <person name="Byers L.A."/>
            <person name="Heymach J.V."/>
            <person name="Girard L."/>
            <person name="Chiang C.M."/>
            <person name="Teruya-Feldstein J."/>
            <person name="Scaglioni P.P."/>
        </authorList>
    </citation>
    <scope>FUNCTION</scope>
    <scope>SUBCELLULAR LOCATION</scope>
    <scope>INTERACTION WITH PML</scope>
</reference>
<reference key="14">
    <citation type="journal article" date="2013" name="Mol. Cell. Biol.">
        <title>Protein inhibitor of activated STAT 1 (PIAS1) is identified as the SUMO E3 ligase of CCAAT/enhancer-binding protein beta (C/EBPbeta) during adipogenesis.</title>
        <authorList>
            <person name="Liu Y."/>
            <person name="Zhang Y.D."/>
            <person name="Guo L."/>
            <person name="Huang H.Y."/>
            <person name="Zhu H."/>
            <person name="Huang J.X."/>
            <person name="Liu Y."/>
            <person name="Zhou S.R."/>
            <person name="Dang Y.J."/>
            <person name="Li X."/>
            <person name="Tang Q.Q."/>
        </authorList>
    </citation>
    <scope>FUNCTION</scope>
    <scope>DEVELOPMENTAL STAGE</scope>
</reference>
<name>PIAS1_MOUSE</name>
<accession>O88907</accession>
<accession>Q8C6H5</accession>
<organism>
    <name type="scientific">Mus musculus</name>
    <name type="common">Mouse</name>
    <dbReference type="NCBI Taxonomy" id="10090"/>
    <lineage>
        <taxon>Eukaryota</taxon>
        <taxon>Metazoa</taxon>
        <taxon>Chordata</taxon>
        <taxon>Craniata</taxon>
        <taxon>Vertebrata</taxon>
        <taxon>Euteleostomi</taxon>
        <taxon>Mammalia</taxon>
        <taxon>Eutheria</taxon>
        <taxon>Euarchontoglires</taxon>
        <taxon>Glires</taxon>
        <taxon>Rodentia</taxon>
        <taxon>Myomorpha</taxon>
        <taxon>Muroidea</taxon>
        <taxon>Muridae</taxon>
        <taxon>Murinae</taxon>
        <taxon>Mus</taxon>
        <taxon>Mus</taxon>
    </lineage>
</organism>